<protein>
    <recommendedName>
        <fullName>Putative flagella synthesis protein FlgN</fullName>
    </recommendedName>
</protein>
<dbReference type="EMBL" id="BA000003">
    <property type="protein sequence ID" value="BAB13040.1"/>
    <property type="molecule type" value="Genomic_DNA"/>
</dbReference>
<dbReference type="RefSeq" id="NP_240154.1">
    <property type="nucleotide sequence ID" value="NC_002528.1"/>
</dbReference>
<dbReference type="SMR" id="P57417"/>
<dbReference type="STRING" id="563178.BUAP5A_329"/>
<dbReference type="EnsemblBacteria" id="BAB13040">
    <property type="protein sequence ID" value="BAB13040"/>
    <property type="gene ID" value="BAB13040"/>
</dbReference>
<dbReference type="KEGG" id="buc:BU335"/>
<dbReference type="PATRIC" id="fig|107806.10.peg.346"/>
<dbReference type="eggNOG" id="COG3418">
    <property type="taxonomic scope" value="Bacteria"/>
</dbReference>
<dbReference type="HOGENOM" id="CLU_1881778_0_0_6"/>
<dbReference type="Proteomes" id="UP000001806">
    <property type="component" value="Chromosome"/>
</dbReference>
<dbReference type="GO" id="GO:0005737">
    <property type="term" value="C:cytoplasm"/>
    <property type="evidence" value="ECO:0007669"/>
    <property type="project" value="UniProtKB-SubCell"/>
</dbReference>
<dbReference type="GO" id="GO:0044780">
    <property type="term" value="P:bacterial-type flagellum assembly"/>
    <property type="evidence" value="ECO:0007669"/>
    <property type="project" value="InterPro"/>
</dbReference>
<dbReference type="InterPro" id="IPR007809">
    <property type="entry name" value="FlgN-like"/>
</dbReference>
<dbReference type="InterPro" id="IPR036679">
    <property type="entry name" value="FlgN-like_sf"/>
</dbReference>
<dbReference type="Pfam" id="PF05130">
    <property type="entry name" value="FlgN"/>
    <property type="match status" value="1"/>
</dbReference>
<dbReference type="SUPFAM" id="SSF140566">
    <property type="entry name" value="FlgN-like"/>
    <property type="match status" value="1"/>
</dbReference>
<gene>
    <name type="primary">flgN</name>
    <name type="ordered locus">BU335</name>
</gene>
<sequence>MNNLIDTIKKIENILYSLERILKQECHNLLKSKTSNEEILELIKRKKILFKKLIILSQDRLCLEKEYNIFPPYESNNKLNNYWKKIINTCLILRKLNLKNKIIMNKKFYLNQRFLELSSSYKKSVTYNLDGNLEI</sequence>
<name>FLGN_BUCAI</name>
<evidence type="ECO:0000250" key="1"/>
<evidence type="ECO:0000305" key="2"/>
<comment type="function">
    <text evidence="1">Required for the efficient initiation of filament assembly.</text>
</comment>
<comment type="subcellular location">
    <subcellularLocation>
        <location evidence="2">Cytoplasm</location>
    </subcellularLocation>
</comment>
<comment type="similarity">
    <text evidence="2">Belongs to the FlgN family.</text>
</comment>
<accession>P57417</accession>
<organism>
    <name type="scientific">Buchnera aphidicola subsp. Acyrthosiphon pisum (strain APS)</name>
    <name type="common">Acyrthosiphon pisum symbiotic bacterium</name>
    <dbReference type="NCBI Taxonomy" id="107806"/>
    <lineage>
        <taxon>Bacteria</taxon>
        <taxon>Pseudomonadati</taxon>
        <taxon>Pseudomonadota</taxon>
        <taxon>Gammaproteobacteria</taxon>
        <taxon>Enterobacterales</taxon>
        <taxon>Erwiniaceae</taxon>
        <taxon>Buchnera</taxon>
    </lineage>
</organism>
<keyword id="KW-1005">Bacterial flagellum biogenesis</keyword>
<keyword id="KW-0963">Cytoplasm</keyword>
<keyword id="KW-1185">Reference proteome</keyword>
<proteinExistence type="inferred from homology"/>
<feature type="chain" id="PRO_0000180865" description="Putative flagella synthesis protein FlgN">
    <location>
        <begin position="1"/>
        <end position="135"/>
    </location>
</feature>
<reference key="1">
    <citation type="journal article" date="2000" name="Nature">
        <title>Genome sequence of the endocellular bacterial symbiont of aphids Buchnera sp. APS.</title>
        <authorList>
            <person name="Shigenobu S."/>
            <person name="Watanabe H."/>
            <person name="Hattori M."/>
            <person name="Sakaki Y."/>
            <person name="Ishikawa H."/>
        </authorList>
    </citation>
    <scope>NUCLEOTIDE SEQUENCE [LARGE SCALE GENOMIC DNA]</scope>
    <source>
        <strain>APS</strain>
    </source>
</reference>